<organism>
    <name type="scientific">Rickettsia massiliae (strain Mtu5)</name>
    <dbReference type="NCBI Taxonomy" id="416276"/>
    <lineage>
        <taxon>Bacteria</taxon>
        <taxon>Pseudomonadati</taxon>
        <taxon>Pseudomonadota</taxon>
        <taxon>Alphaproteobacteria</taxon>
        <taxon>Rickettsiales</taxon>
        <taxon>Rickettsiaceae</taxon>
        <taxon>Rickettsieae</taxon>
        <taxon>Rickettsia</taxon>
        <taxon>spotted fever group</taxon>
    </lineage>
</organism>
<proteinExistence type="inferred from homology"/>
<name>YCIB_RICM5</name>
<dbReference type="EMBL" id="CP000683">
    <property type="protein sequence ID" value="ABV84749.1"/>
    <property type="molecule type" value="Genomic_DNA"/>
</dbReference>
<dbReference type="RefSeq" id="WP_012152724.1">
    <property type="nucleotide sequence ID" value="NC_009900.1"/>
</dbReference>
<dbReference type="SMR" id="A8F1G3"/>
<dbReference type="KEGG" id="rms:RMA_0556"/>
<dbReference type="HOGENOM" id="CLU_089554_1_1_5"/>
<dbReference type="Proteomes" id="UP000001311">
    <property type="component" value="Chromosome"/>
</dbReference>
<dbReference type="GO" id="GO:0005886">
    <property type="term" value="C:plasma membrane"/>
    <property type="evidence" value="ECO:0007669"/>
    <property type="project" value="UniProtKB-SubCell"/>
</dbReference>
<dbReference type="HAMAP" id="MF_00189">
    <property type="entry name" value="YciB"/>
    <property type="match status" value="1"/>
</dbReference>
<dbReference type="InterPro" id="IPR006008">
    <property type="entry name" value="YciB"/>
</dbReference>
<dbReference type="NCBIfam" id="TIGR00997">
    <property type="entry name" value="ispZ"/>
    <property type="match status" value="1"/>
</dbReference>
<dbReference type="NCBIfam" id="NF001323">
    <property type="entry name" value="PRK00259.1-1"/>
    <property type="match status" value="1"/>
</dbReference>
<dbReference type="PANTHER" id="PTHR36917:SF1">
    <property type="entry name" value="INNER MEMBRANE-SPANNING PROTEIN YCIB"/>
    <property type="match status" value="1"/>
</dbReference>
<dbReference type="PANTHER" id="PTHR36917">
    <property type="entry name" value="INTRACELLULAR SEPTATION PROTEIN A-RELATED"/>
    <property type="match status" value="1"/>
</dbReference>
<dbReference type="Pfam" id="PF04279">
    <property type="entry name" value="IspA"/>
    <property type="match status" value="1"/>
</dbReference>
<evidence type="ECO:0000255" key="1">
    <source>
        <dbReference type="HAMAP-Rule" id="MF_00189"/>
    </source>
</evidence>
<accession>A8F1G3</accession>
<gene>
    <name evidence="1" type="primary">yciB</name>
    <name type="ordered locus">RMA_0556</name>
</gene>
<keyword id="KW-0997">Cell inner membrane</keyword>
<keyword id="KW-1003">Cell membrane</keyword>
<keyword id="KW-0472">Membrane</keyword>
<keyword id="KW-0812">Transmembrane</keyword>
<keyword id="KW-1133">Transmembrane helix</keyword>
<reference key="1">
    <citation type="journal article" date="2007" name="Genome Res.">
        <title>Lateral gene transfer between obligate intracellular bacteria: evidence from the Rickettsia massiliae genome.</title>
        <authorList>
            <person name="Blanc G."/>
            <person name="Ogata H."/>
            <person name="Robert C."/>
            <person name="Audic S."/>
            <person name="Claverie J.-M."/>
            <person name="Raoult D."/>
        </authorList>
    </citation>
    <scope>NUCLEOTIDE SEQUENCE [LARGE SCALE GENOMIC DNA]</scope>
    <source>
        <strain>Mtu5</strain>
    </source>
</reference>
<protein>
    <recommendedName>
        <fullName evidence="1">Inner membrane-spanning protein YciB</fullName>
    </recommendedName>
</protein>
<feature type="chain" id="PRO_1000058476" description="Inner membrane-spanning protein YciB">
    <location>
        <begin position="1"/>
        <end position="180"/>
    </location>
</feature>
<feature type="transmembrane region" description="Helical" evidence="1">
    <location>
        <begin position="4"/>
        <end position="24"/>
    </location>
</feature>
<feature type="transmembrane region" description="Helical" evidence="1">
    <location>
        <begin position="25"/>
        <end position="45"/>
    </location>
</feature>
<feature type="transmembrane region" description="Helical" evidence="1">
    <location>
        <begin position="52"/>
        <end position="72"/>
    </location>
</feature>
<feature type="transmembrane region" description="Helical" evidence="1">
    <location>
        <begin position="76"/>
        <end position="96"/>
    </location>
</feature>
<feature type="transmembrane region" description="Helical" evidence="1">
    <location>
        <begin position="118"/>
        <end position="138"/>
    </location>
</feature>
<feature type="transmembrane region" description="Helical" evidence="1">
    <location>
        <begin position="150"/>
        <end position="170"/>
    </location>
</feature>
<sequence length="180" mass="20379">MLKLLSEIGPVIAFFAGFFYGGGIQHATLYMLITSVICITLCYVIDKKVSKLSIISTTVLLVSGSITLISGNSMYIKIKPTILYVIFGIIFLMSGIRKNPFIKYALESIVRLKEESWITLSYRTAAFFFFMAVVNEVVWRNFSDETWVKFKVFGVIPITVIFILLQLPLLLKNKLPDSKI</sequence>
<comment type="function">
    <text evidence="1">Plays a role in cell envelope biogenesis, maintenance of cell envelope integrity and membrane homeostasis.</text>
</comment>
<comment type="subcellular location">
    <subcellularLocation>
        <location evidence="1">Cell inner membrane</location>
        <topology evidence="1">Multi-pass membrane protein</topology>
    </subcellularLocation>
</comment>
<comment type="similarity">
    <text evidence="1">Belongs to the YciB family.</text>
</comment>